<dbReference type="EMBL" id="D00364">
    <property type="protein sequence ID" value="BAA00270.1"/>
    <property type="molecule type" value="Genomic_DNA"/>
</dbReference>
<dbReference type="PIR" id="JU0071">
    <property type="entry name" value="JU0071"/>
</dbReference>
<dbReference type="RefSeq" id="WP_001331364.1">
    <property type="nucleotide sequence ID" value="NZ_WVVP01000033.1"/>
</dbReference>
<dbReference type="RefSeq" id="YP_009061145.1">
    <property type="nucleotide sequence ID" value="NC_024975.1"/>
</dbReference>
<dbReference type="SMR" id="P16477"/>
<dbReference type="GO" id="GO:0005886">
    <property type="term" value="C:plasma membrane"/>
    <property type="evidence" value="ECO:0007669"/>
    <property type="project" value="UniProtKB-SubCell"/>
</dbReference>
<dbReference type="InterPro" id="IPR000021">
    <property type="entry name" value="Hok/gef_toxin"/>
</dbReference>
<dbReference type="InterPro" id="IPR018084">
    <property type="entry name" value="Hok/gef_toxin_CS"/>
</dbReference>
<dbReference type="Pfam" id="PF01848">
    <property type="entry name" value="HOK_GEF"/>
    <property type="match status" value="1"/>
</dbReference>
<dbReference type="PRINTS" id="PR00281">
    <property type="entry name" value="HOKGEFTOXIC"/>
</dbReference>
<dbReference type="PROSITE" id="PS00556">
    <property type="entry name" value="HOK_GEF"/>
    <property type="match status" value="1"/>
</dbReference>
<sequence>MPQRTFLMMLIVICVTILCFVWMVRDSLCGLRLQQGNTVLVATLAYEVKR</sequence>
<protein>
    <recommendedName>
        <fullName>Protein PndA</fullName>
    </recommendedName>
</protein>
<organism>
    <name type="scientific">Escherichia coli</name>
    <dbReference type="NCBI Taxonomy" id="562"/>
    <lineage>
        <taxon>Bacteria</taxon>
        <taxon>Pseudomonadati</taxon>
        <taxon>Pseudomonadota</taxon>
        <taxon>Gammaproteobacteria</taxon>
        <taxon>Enterobacterales</taxon>
        <taxon>Enterobacteriaceae</taxon>
        <taxon>Escherichia</taxon>
    </lineage>
</organism>
<comment type="function">
    <text evidence="1 3">Toxic component of a type I toxin-antitoxin (TA) system (By similarity). When expressed is involved in cellular Mg(2+) release and degradation of stable RNA (PubMed:3328043).</text>
</comment>
<comment type="subcellular location">
    <subcellularLocation>
        <location evidence="1">Cell inner membrane</location>
        <topology evidence="4">Single-pass membrane protein</topology>
    </subcellularLocation>
</comment>
<comment type="similarity">
    <text evidence="4">Belongs to the Hok/Gef family.</text>
</comment>
<geneLocation type="plasmid">
    <name>IncI1 R483</name>
</geneLocation>
<feature type="chain" id="PRO_0000199044" description="Protein PndA">
    <location>
        <begin position="1"/>
        <end position="50"/>
    </location>
</feature>
<feature type="transmembrane region" description="Helical" evidence="2">
    <location>
        <begin position="5"/>
        <end position="25"/>
    </location>
</feature>
<reference key="1">
    <citation type="journal article" date="1987" name="Microbiol. Immunol.">
        <title>Nucleotide sequence of the pnd gene in plasmid R483 and role of the pnd gene product in plasmolysis.</title>
        <authorList>
            <person name="Ono K."/>
            <person name="Akimoto S."/>
            <person name="Ohnishi Y."/>
        </authorList>
    </citation>
    <scope>NUCLEOTIDE SEQUENCE [GENOMIC DNA]</scope>
</reference>
<name>PNDA2_ECOLX</name>
<evidence type="ECO:0000250" key="1">
    <source>
        <dbReference type="UniProtKB" id="P0ACG4"/>
    </source>
</evidence>
<evidence type="ECO:0000255" key="2"/>
<evidence type="ECO:0000269" key="3">
    <source>
    </source>
</evidence>
<evidence type="ECO:0000305" key="4"/>
<proteinExistence type="inferred from homology"/>
<keyword id="KW-0997">Cell inner membrane</keyword>
<keyword id="KW-1003">Cell membrane</keyword>
<keyword id="KW-0472">Membrane</keyword>
<keyword id="KW-0614">Plasmid</keyword>
<keyword id="KW-1277">Toxin-antitoxin system</keyword>
<keyword id="KW-0812">Transmembrane</keyword>
<keyword id="KW-1133">Transmembrane helix</keyword>
<accession>P16477</accession>
<gene>
    <name type="primary">pndA</name>
    <name type="synonym">pnd</name>
</gene>